<evidence type="ECO:0000255" key="1">
    <source>
        <dbReference type="HAMAP-Rule" id="MF_01347"/>
    </source>
</evidence>
<evidence type="ECO:0000256" key="2">
    <source>
        <dbReference type="SAM" id="MobiDB-lite"/>
    </source>
</evidence>
<organism>
    <name type="scientific">Zymomonas mobilis subsp. mobilis (strain ATCC 31821 / ZM4 / CP4)</name>
    <dbReference type="NCBI Taxonomy" id="264203"/>
    <lineage>
        <taxon>Bacteria</taxon>
        <taxon>Pseudomonadati</taxon>
        <taxon>Pseudomonadota</taxon>
        <taxon>Alphaproteobacteria</taxon>
        <taxon>Sphingomonadales</taxon>
        <taxon>Zymomonadaceae</taxon>
        <taxon>Zymomonas</taxon>
    </lineage>
</organism>
<comment type="function">
    <text evidence="1">Produces ATP from ADP in the presence of a proton gradient across the membrane. The catalytic sites are hosted primarily by the beta subunits.</text>
</comment>
<comment type="catalytic activity">
    <reaction evidence="1">
        <text>ATP + H2O + 4 H(+)(in) = ADP + phosphate + 5 H(+)(out)</text>
        <dbReference type="Rhea" id="RHEA:57720"/>
        <dbReference type="ChEBI" id="CHEBI:15377"/>
        <dbReference type="ChEBI" id="CHEBI:15378"/>
        <dbReference type="ChEBI" id="CHEBI:30616"/>
        <dbReference type="ChEBI" id="CHEBI:43474"/>
        <dbReference type="ChEBI" id="CHEBI:456216"/>
        <dbReference type="EC" id="7.1.2.2"/>
    </reaction>
</comment>
<comment type="subunit">
    <text evidence="1">F-type ATPases have 2 components, CF(1) - the catalytic core - and CF(0) - the membrane proton channel. CF(1) has five subunits: alpha(3), beta(3), gamma(1), delta(1), epsilon(1). CF(0) has three main subunits: a(1), b(2) and c(9-12). The alpha and beta chains form an alternating ring which encloses part of the gamma chain. CF(1) is attached to CF(0) by a central stalk formed by the gamma and epsilon chains, while a peripheral stalk is formed by the delta and b chains.</text>
</comment>
<comment type="subcellular location">
    <subcellularLocation>
        <location evidence="1">Cell inner membrane</location>
        <topology evidence="1">Peripheral membrane protein</topology>
    </subcellularLocation>
</comment>
<comment type="similarity">
    <text evidence="1">Belongs to the ATPase alpha/beta chains family.</text>
</comment>
<proteinExistence type="inferred from homology"/>
<name>ATPB_ZYMMO</name>
<reference key="1">
    <citation type="journal article" date="2005" name="Nat. Biotechnol.">
        <title>The genome sequence of the ethanologenic bacterium Zymomonas mobilis ZM4.</title>
        <authorList>
            <person name="Seo J.-S."/>
            <person name="Chong H."/>
            <person name="Park H.S."/>
            <person name="Yoon K.-O."/>
            <person name="Jung C."/>
            <person name="Kim J.J."/>
            <person name="Hong J.H."/>
            <person name="Kim H."/>
            <person name="Kim J.-H."/>
            <person name="Kil J.-I."/>
            <person name="Park C.J."/>
            <person name="Oh H.-M."/>
            <person name="Lee J.-S."/>
            <person name="Jin S.-J."/>
            <person name="Um H.-W."/>
            <person name="Lee H.-J."/>
            <person name="Oh S.-J."/>
            <person name="Kim J.Y."/>
            <person name="Kang H.L."/>
            <person name="Lee S.Y."/>
            <person name="Lee K.J."/>
            <person name="Kang H.S."/>
        </authorList>
    </citation>
    <scope>NUCLEOTIDE SEQUENCE [LARGE SCALE GENOMIC DNA]</scope>
    <source>
        <strain>ATCC 31821 / ZM4 / CP4</strain>
    </source>
</reference>
<feature type="chain" id="PRO_0000254437" description="ATP synthase subunit beta">
    <location>
        <begin position="1"/>
        <end position="484"/>
    </location>
</feature>
<feature type="region of interest" description="Disordered" evidence="2">
    <location>
        <begin position="104"/>
        <end position="123"/>
    </location>
</feature>
<feature type="binding site" evidence="1">
    <location>
        <begin position="156"/>
        <end position="163"/>
    </location>
    <ligand>
        <name>ATP</name>
        <dbReference type="ChEBI" id="CHEBI:30616"/>
    </ligand>
</feature>
<dbReference type="EC" id="7.1.2.2" evidence="1"/>
<dbReference type="EMBL" id="AE008692">
    <property type="protein sequence ID" value="AAV88865.1"/>
    <property type="molecule type" value="Genomic_DNA"/>
</dbReference>
<dbReference type="RefSeq" id="WP_011240186.1">
    <property type="nucleotide sequence ID" value="NZ_CP035711.1"/>
</dbReference>
<dbReference type="SMR" id="Q5NQY9"/>
<dbReference type="STRING" id="264203.ZMO0241"/>
<dbReference type="GeneID" id="79904529"/>
<dbReference type="KEGG" id="zmo:ZMO0241"/>
<dbReference type="eggNOG" id="COG0055">
    <property type="taxonomic scope" value="Bacteria"/>
</dbReference>
<dbReference type="HOGENOM" id="CLU_022398_0_2_5"/>
<dbReference type="Proteomes" id="UP000001173">
    <property type="component" value="Chromosome"/>
</dbReference>
<dbReference type="GO" id="GO:0005886">
    <property type="term" value="C:plasma membrane"/>
    <property type="evidence" value="ECO:0007669"/>
    <property type="project" value="UniProtKB-SubCell"/>
</dbReference>
<dbReference type="GO" id="GO:0045259">
    <property type="term" value="C:proton-transporting ATP synthase complex"/>
    <property type="evidence" value="ECO:0007669"/>
    <property type="project" value="UniProtKB-KW"/>
</dbReference>
<dbReference type="GO" id="GO:0005524">
    <property type="term" value="F:ATP binding"/>
    <property type="evidence" value="ECO:0007669"/>
    <property type="project" value="UniProtKB-UniRule"/>
</dbReference>
<dbReference type="GO" id="GO:0016887">
    <property type="term" value="F:ATP hydrolysis activity"/>
    <property type="evidence" value="ECO:0007669"/>
    <property type="project" value="InterPro"/>
</dbReference>
<dbReference type="GO" id="GO:0046933">
    <property type="term" value="F:proton-transporting ATP synthase activity, rotational mechanism"/>
    <property type="evidence" value="ECO:0007669"/>
    <property type="project" value="UniProtKB-UniRule"/>
</dbReference>
<dbReference type="CDD" id="cd18110">
    <property type="entry name" value="ATP-synt_F1_beta_C"/>
    <property type="match status" value="1"/>
</dbReference>
<dbReference type="CDD" id="cd18115">
    <property type="entry name" value="ATP-synt_F1_beta_N"/>
    <property type="match status" value="1"/>
</dbReference>
<dbReference type="CDD" id="cd01133">
    <property type="entry name" value="F1-ATPase_beta_CD"/>
    <property type="match status" value="1"/>
</dbReference>
<dbReference type="FunFam" id="1.10.1140.10:FF:000001">
    <property type="entry name" value="ATP synthase subunit beta"/>
    <property type="match status" value="1"/>
</dbReference>
<dbReference type="FunFam" id="2.40.10.170:FF:000005">
    <property type="entry name" value="ATP synthase subunit beta"/>
    <property type="match status" value="1"/>
</dbReference>
<dbReference type="FunFam" id="3.40.50.300:FF:000026">
    <property type="entry name" value="ATP synthase subunit beta"/>
    <property type="match status" value="1"/>
</dbReference>
<dbReference type="Gene3D" id="2.40.10.170">
    <property type="match status" value="1"/>
</dbReference>
<dbReference type="Gene3D" id="1.10.1140.10">
    <property type="entry name" value="Bovine Mitochondrial F1-atpase, Atp Synthase Beta Chain, Chain D, domain 3"/>
    <property type="match status" value="1"/>
</dbReference>
<dbReference type="Gene3D" id="3.40.50.300">
    <property type="entry name" value="P-loop containing nucleotide triphosphate hydrolases"/>
    <property type="match status" value="1"/>
</dbReference>
<dbReference type="HAMAP" id="MF_01347">
    <property type="entry name" value="ATP_synth_beta_bact"/>
    <property type="match status" value="1"/>
</dbReference>
<dbReference type="InterPro" id="IPR003593">
    <property type="entry name" value="AAA+_ATPase"/>
</dbReference>
<dbReference type="InterPro" id="IPR055190">
    <property type="entry name" value="ATP-synt_VA_C"/>
</dbReference>
<dbReference type="InterPro" id="IPR005722">
    <property type="entry name" value="ATP_synth_F1_bsu"/>
</dbReference>
<dbReference type="InterPro" id="IPR020003">
    <property type="entry name" value="ATPase_a/bsu_AS"/>
</dbReference>
<dbReference type="InterPro" id="IPR050053">
    <property type="entry name" value="ATPase_alpha/beta_chains"/>
</dbReference>
<dbReference type="InterPro" id="IPR004100">
    <property type="entry name" value="ATPase_F1/V1/A1_a/bsu_N"/>
</dbReference>
<dbReference type="InterPro" id="IPR036121">
    <property type="entry name" value="ATPase_F1/V1/A1_a/bsu_N_sf"/>
</dbReference>
<dbReference type="InterPro" id="IPR000194">
    <property type="entry name" value="ATPase_F1/V1/A1_a/bsu_nucl-bd"/>
</dbReference>
<dbReference type="InterPro" id="IPR024034">
    <property type="entry name" value="ATPase_F1/V1_b/a_C"/>
</dbReference>
<dbReference type="InterPro" id="IPR027417">
    <property type="entry name" value="P-loop_NTPase"/>
</dbReference>
<dbReference type="NCBIfam" id="TIGR01039">
    <property type="entry name" value="atpD"/>
    <property type="match status" value="1"/>
</dbReference>
<dbReference type="PANTHER" id="PTHR15184">
    <property type="entry name" value="ATP SYNTHASE"/>
    <property type="match status" value="1"/>
</dbReference>
<dbReference type="PANTHER" id="PTHR15184:SF82">
    <property type="entry name" value="ATP SYNTHASE SUBUNIT BETA, MITOCHONDRIAL"/>
    <property type="match status" value="1"/>
</dbReference>
<dbReference type="Pfam" id="PF00006">
    <property type="entry name" value="ATP-synt_ab"/>
    <property type="match status" value="1"/>
</dbReference>
<dbReference type="Pfam" id="PF02874">
    <property type="entry name" value="ATP-synt_ab_N"/>
    <property type="match status" value="1"/>
</dbReference>
<dbReference type="Pfam" id="PF22919">
    <property type="entry name" value="ATP-synt_VA_C"/>
    <property type="match status" value="1"/>
</dbReference>
<dbReference type="PIRSF" id="PIRSF039072">
    <property type="entry name" value="ATPase_subunit_beta"/>
    <property type="match status" value="1"/>
</dbReference>
<dbReference type="SMART" id="SM00382">
    <property type="entry name" value="AAA"/>
    <property type="match status" value="1"/>
</dbReference>
<dbReference type="SUPFAM" id="SSF47917">
    <property type="entry name" value="C-terminal domain of alpha and beta subunits of F1 ATP synthase"/>
    <property type="match status" value="1"/>
</dbReference>
<dbReference type="SUPFAM" id="SSF50615">
    <property type="entry name" value="N-terminal domain of alpha and beta subunits of F1 ATP synthase"/>
    <property type="match status" value="1"/>
</dbReference>
<dbReference type="SUPFAM" id="SSF52540">
    <property type="entry name" value="P-loop containing nucleoside triphosphate hydrolases"/>
    <property type="match status" value="1"/>
</dbReference>
<dbReference type="PROSITE" id="PS00152">
    <property type="entry name" value="ATPASE_ALPHA_BETA"/>
    <property type="match status" value="1"/>
</dbReference>
<keyword id="KW-0066">ATP synthesis</keyword>
<keyword id="KW-0067">ATP-binding</keyword>
<keyword id="KW-0997">Cell inner membrane</keyword>
<keyword id="KW-1003">Cell membrane</keyword>
<keyword id="KW-0139">CF(1)</keyword>
<keyword id="KW-0375">Hydrogen ion transport</keyword>
<keyword id="KW-0406">Ion transport</keyword>
<keyword id="KW-0472">Membrane</keyword>
<keyword id="KW-0547">Nucleotide-binding</keyword>
<keyword id="KW-1185">Reference proteome</keyword>
<keyword id="KW-1278">Translocase</keyword>
<keyword id="KW-0813">Transport</keyword>
<accession>Q5NQY9</accession>
<sequence length="484" mass="52161">MATASSKKNIGRISQVIGPVVDVLFEEKLPPLLTALETKNQDATVVLEVAQHLGENVVRTISMDTTDGLVRGQEVVDTGSEIRVPVGPETLGRIMNVVGRPVDERGPIGSKQTMPIHADAPPFTEQSTDTAILTTGIKVIDLLAPYSKGGKVGLFGGAGVGKTVLIQELINNIAKGHGGFSVFAGVGERTREGNDLYHEFLEAGVIASDKDGNAISEGSKVALVYGQMNEPPGARARVALSGLTMAEYFRDQEGQDVLFFVDNIFRFTQAGAEVSALLGRIPSAVGYQPTLATDMGQLQERITSTKKGSITSVQAIYVPADDLTDPAPAASFAHLDATTVLSRAISEMGIYPAVDPLDSSSRNLEPRIVGDEHYQTARDVQEILQRYKNLQDIIAILGMDELSEDDRKVVGRARRIQRFLSQPFHVAEVFTGMPGKFVQVEDTVRSFREIIDGKYDDLPENAFYMVGSIDEAVAKAEKMAAEAA</sequence>
<protein>
    <recommendedName>
        <fullName evidence="1">ATP synthase subunit beta</fullName>
        <ecNumber evidence="1">7.1.2.2</ecNumber>
    </recommendedName>
    <alternativeName>
        <fullName evidence="1">ATP synthase F1 sector subunit beta</fullName>
    </alternativeName>
    <alternativeName>
        <fullName evidence="1">F-ATPase subunit beta</fullName>
    </alternativeName>
</protein>
<gene>
    <name evidence="1" type="primary">atpD</name>
    <name type="ordered locus">ZMO0241</name>
</gene>